<sequence length="322" mass="34891">MMESGEALLKKLDGRLSGLRGRLTPDTGMDKITWFRAGGPAQVLFQPSDEEDLSAFLKAVPEEIPLLVVGIGSNLLVRDGGVPGFVVRLSAKGFGEVEQVCDTQLRAGAAAPDKRVAAAALEAGLAGFHFYHGIPGGVGGALRMNAGANGVETRERVVEVRALDRKGEVHVLSNADMGYAYRHSSASPDLIFTSVLFEGVPGERDDIRRAMDEVQHHRETVQPVREKTGGSTFKNPEGTSAWKEIDKAGCRGLRVGGAQMSEMHCNFMINTGNATGHDLETLGETVRARVFENSGIRLHWEIKRLGLFREGEQIEEFLGKII</sequence>
<keyword id="KW-0131">Cell cycle</keyword>
<keyword id="KW-0132">Cell division</keyword>
<keyword id="KW-0133">Cell shape</keyword>
<keyword id="KW-0961">Cell wall biogenesis/degradation</keyword>
<keyword id="KW-0963">Cytoplasm</keyword>
<keyword id="KW-0274">FAD</keyword>
<keyword id="KW-0285">Flavoprotein</keyword>
<keyword id="KW-0521">NADP</keyword>
<keyword id="KW-0560">Oxidoreductase</keyword>
<keyword id="KW-0573">Peptidoglycan synthesis</keyword>
<protein>
    <recommendedName>
        <fullName evidence="1">UDP-N-acetylenolpyruvoylglucosamine reductase</fullName>
        <ecNumber evidence="1">1.3.1.98</ecNumber>
    </recommendedName>
    <alternativeName>
        <fullName evidence="1">UDP-N-acetylmuramate dehydrogenase</fullName>
    </alternativeName>
</protein>
<comment type="function">
    <text evidence="1">Cell wall formation.</text>
</comment>
<comment type="catalytic activity">
    <reaction evidence="1">
        <text>UDP-N-acetyl-alpha-D-muramate + NADP(+) = UDP-N-acetyl-3-O-(1-carboxyvinyl)-alpha-D-glucosamine + NADPH + H(+)</text>
        <dbReference type="Rhea" id="RHEA:12248"/>
        <dbReference type="ChEBI" id="CHEBI:15378"/>
        <dbReference type="ChEBI" id="CHEBI:57783"/>
        <dbReference type="ChEBI" id="CHEBI:58349"/>
        <dbReference type="ChEBI" id="CHEBI:68483"/>
        <dbReference type="ChEBI" id="CHEBI:70757"/>
        <dbReference type="EC" id="1.3.1.98"/>
    </reaction>
</comment>
<comment type="cofactor">
    <cofactor evidence="1">
        <name>FAD</name>
        <dbReference type="ChEBI" id="CHEBI:57692"/>
    </cofactor>
</comment>
<comment type="pathway">
    <text evidence="1">Cell wall biogenesis; peptidoglycan biosynthesis.</text>
</comment>
<comment type="subcellular location">
    <subcellularLocation>
        <location evidence="1">Cytoplasm</location>
    </subcellularLocation>
</comment>
<comment type="similarity">
    <text evidence="1">Belongs to the MurB family.</text>
</comment>
<dbReference type="EC" id="1.3.1.98" evidence="1"/>
<dbReference type="EMBL" id="AE014291">
    <property type="protein sequence ID" value="AAN30342.1"/>
    <property type="molecule type" value="Genomic_DNA"/>
</dbReference>
<dbReference type="EMBL" id="CP002997">
    <property type="protein sequence ID" value="AEM18758.1"/>
    <property type="molecule type" value="Genomic_DNA"/>
</dbReference>
<dbReference type="RefSeq" id="WP_006190598.1">
    <property type="nucleotide sequence ID" value="NZ_KN046804.1"/>
</dbReference>
<dbReference type="SMR" id="Q8FZP4"/>
<dbReference type="GeneID" id="45052440"/>
<dbReference type="KEGG" id="bms:BR1429"/>
<dbReference type="KEGG" id="bsi:BS1330_I1423"/>
<dbReference type="PATRIC" id="fig|204722.21.peg.916"/>
<dbReference type="HOGENOM" id="CLU_035304_1_0_5"/>
<dbReference type="UniPathway" id="UPA00219"/>
<dbReference type="Proteomes" id="UP000007104">
    <property type="component" value="Chromosome I"/>
</dbReference>
<dbReference type="GO" id="GO:0005829">
    <property type="term" value="C:cytosol"/>
    <property type="evidence" value="ECO:0007669"/>
    <property type="project" value="TreeGrafter"/>
</dbReference>
<dbReference type="GO" id="GO:0071949">
    <property type="term" value="F:FAD binding"/>
    <property type="evidence" value="ECO:0007669"/>
    <property type="project" value="InterPro"/>
</dbReference>
<dbReference type="GO" id="GO:0008762">
    <property type="term" value="F:UDP-N-acetylmuramate dehydrogenase activity"/>
    <property type="evidence" value="ECO:0007669"/>
    <property type="project" value="UniProtKB-UniRule"/>
</dbReference>
<dbReference type="GO" id="GO:0051301">
    <property type="term" value="P:cell division"/>
    <property type="evidence" value="ECO:0007669"/>
    <property type="project" value="UniProtKB-KW"/>
</dbReference>
<dbReference type="GO" id="GO:0071555">
    <property type="term" value="P:cell wall organization"/>
    <property type="evidence" value="ECO:0007669"/>
    <property type="project" value="UniProtKB-KW"/>
</dbReference>
<dbReference type="GO" id="GO:0009252">
    <property type="term" value="P:peptidoglycan biosynthetic process"/>
    <property type="evidence" value="ECO:0007669"/>
    <property type="project" value="UniProtKB-UniRule"/>
</dbReference>
<dbReference type="GO" id="GO:0008360">
    <property type="term" value="P:regulation of cell shape"/>
    <property type="evidence" value="ECO:0007669"/>
    <property type="project" value="UniProtKB-KW"/>
</dbReference>
<dbReference type="Gene3D" id="3.30.465.10">
    <property type="match status" value="1"/>
</dbReference>
<dbReference type="Gene3D" id="3.90.78.10">
    <property type="entry name" value="UDP-N-acetylenolpyruvoylglucosamine reductase, C-terminal domain"/>
    <property type="match status" value="1"/>
</dbReference>
<dbReference type="Gene3D" id="3.30.43.10">
    <property type="entry name" value="Uridine Diphospho-n-acetylenolpyruvylglucosamine Reductase, domain 2"/>
    <property type="match status" value="1"/>
</dbReference>
<dbReference type="HAMAP" id="MF_00037">
    <property type="entry name" value="MurB"/>
    <property type="match status" value="1"/>
</dbReference>
<dbReference type="InterPro" id="IPR016166">
    <property type="entry name" value="FAD-bd_PCMH"/>
</dbReference>
<dbReference type="InterPro" id="IPR036318">
    <property type="entry name" value="FAD-bd_PCMH-like_sf"/>
</dbReference>
<dbReference type="InterPro" id="IPR016167">
    <property type="entry name" value="FAD-bd_PCMH_sub1"/>
</dbReference>
<dbReference type="InterPro" id="IPR016169">
    <property type="entry name" value="FAD-bd_PCMH_sub2"/>
</dbReference>
<dbReference type="InterPro" id="IPR003170">
    <property type="entry name" value="MurB"/>
</dbReference>
<dbReference type="InterPro" id="IPR011601">
    <property type="entry name" value="MurB_C"/>
</dbReference>
<dbReference type="InterPro" id="IPR036635">
    <property type="entry name" value="MurB_C_sf"/>
</dbReference>
<dbReference type="InterPro" id="IPR006094">
    <property type="entry name" value="Oxid_FAD_bind_N"/>
</dbReference>
<dbReference type="NCBIfam" id="TIGR00179">
    <property type="entry name" value="murB"/>
    <property type="match status" value="1"/>
</dbReference>
<dbReference type="NCBIfam" id="NF010480">
    <property type="entry name" value="PRK13905.1"/>
    <property type="match status" value="1"/>
</dbReference>
<dbReference type="PANTHER" id="PTHR21071">
    <property type="entry name" value="UDP-N-ACETYLENOLPYRUVOYLGLUCOSAMINE REDUCTASE"/>
    <property type="match status" value="1"/>
</dbReference>
<dbReference type="PANTHER" id="PTHR21071:SF4">
    <property type="entry name" value="UDP-N-ACETYLENOLPYRUVOYLGLUCOSAMINE REDUCTASE"/>
    <property type="match status" value="1"/>
</dbReference>
<dbReference type="Pfam" id="PF01565">
    <property type="entry name" value="FAD_binding_4"/>
    <property type="match status" value="1"/>
</dbReference>
<dbReference type="Pfam" id="PF02873">
    <property type="entry name" value="MurB_C"/>
    <property type="match status" value="1"/>
</dbReference>
<dbReference type="SUPFAM" id="SSF56176">
    <property type="entry name" value="FAD-binding/transporter-associated domain-like"/>
    <property type="match status" value="1"/>
</dbReference>
<dbReference type="SUPFAM" id="SSF56194">
    <property type="entry name" value="Uridine diphospho-N-Acetylenolpyruvylglucosamine reductase, MurB, C-terminal domain"/>
    <property type="match status" value="1"/>
</dbReference>
<dbReference type="PROSITE" id="PS51387">
    <property type="entry name" value="FAD_PCMH"/>
    <property type="match status" value="1"/>
</dbReference>
<evidence type="ECO:0000255" key="1">
    <source>
        <dbReference type="HAMAP-Rule" id="MF_00037"/>
    </source>
</evidence>
<name>MURB_BRUSU</name>
<organism>
    <name type="scientific">Brucella suis biovar 1 (strain 1330)</name>
    <dbReference type="NCBI Taxonomy" id="204722"/>
    <lineage>
        <taxon>Bacteria</taxon>
        <taxon>Pseudomonadati</taxon>
        <taxon>Pseudomonadota</taxon>
        <taxon>Alphaproteobacteria</taxon>
        <taxon>Hyphomicrobiales</taxon>
        <taxon>Brucellaceae</taxon>
        <taxon>Brucella/Ochrobactrum group</taxon>
        <taxon>Brucella</taxon>
    </lineage>
</organism>
<accession>Q8FZP4</accession>
<accession>G0KBI9</accession>
<feature type="chain" id="PRO_0000179186" description="UDP-N-acetylenolpyruvoylglucosamine reductase">
    <location>
        <begin position="1"/>
        <end position="322"/>
    </location>
</feature>
<feature type="domain" description="FAD-binding PCMH-type" evidence="1">
    <location>
        <begin position="36"/>
        <end position="202"/>
    </location>
</feature>
<feature type="active site" evidence="1">
    <location>
        <position position="182"/>
    </location>
</feature>
<feature type="active site" description="Proton donor" evidence="1">
    <location>
        <position position="231"/>
    </location>
</feature>
<feature type="active site" evidence="1">
    <location>
        <position position="301"/>
    </location>
</feature>
<reference key="1">
    <citation type="journal article" date="2002" name="Proc. Natl. Acad. Sci. U.S.A.">
        <title>The Brucella suis genome reveals fundamental similarities between animal and plant pathogens and symbionts.</title>
        <authorList>
            <person name="Paulsen I.T."/>
            <person name="Seshadri R."/>
            <person name="Nelson K.E."/>
            <person name="Eisen J.A."/>
            <person name="Heidelberg J.F."/>
            <person name="Read T.D."/>
            <person name="Dodson R.J."/>
            <person name="Umayam L.A."/>
            <person name="Brinkac L.M."/>
            <person name="Beanan M.J."/>
            <person name="Daugherty S.C."/>
            <person name="DeBoy R.T."/>
            <person name="Durkin A.S."/>
            <person name="Kolonay J.F."/>
            <person name="Madupu R."/>
            <person name="Nelson W.C."/>
            <person name="Ayodeji B."/>
            <person name="Kraul M."/>
            <person name="Shetty J."/>
            <person name="Malek J.A."/>
            <person name="Van Aken S.E."/>
            <person name="Riedmuller S."/>
            <person name="Tettelin H."/>
            <person name="Gill S.R."/>
            <person name="White O."/>
            <person name="Salzberg S.L."/>
            <person name="Hoover D.L."/>
            <person name="Lindler L.E."/>
            <person name="Halling S.M."/>
            <person name="Boyle S.M."/>
            <person name="Fraser C.M."/>
        </authorList>
    </citation>
    <scope>NUCLEOTIDE SEQUENCE [LARGE SCALE GENOMIC DNA]</scope>
    <source>
        <strain>1330</strain>
    </source>
</reference>
<reference key="2">
    <citation type="journal article" date="2011" name="J. Bacteriol.">
        <title>Revised genome sequence of Brucella suis 1330.</title>
        <authorList>
            <person name="Tae H."/>
            <person name="Shallom S."/>
            <person name="Settlage R."/>
            <person name="Preston D."/>
            <person name="Adams L.G."/>
            <person name="Garner H.R."/>
        </authorList>
    </citation>
    <scope>NUCLEOTIDE SEQUENCE [LARGE SCALE GENOMIC DNA]</scope>
    <source>
        <strain>1330</strain>
    </source>
</reference>
<gene>
    <name evidence="1" type="primary">murB</name>
    <name type="ordered locus">BR1429</name>
    <name type="ordered locus">BS1330_I1423</name>
</gene>
<proteinExistence type="inferred from homology"/>